<keyword id="KW-0067">ATP-binding</keyword>
<keyword id="KW-0173">Coenzyme A biosynthesis</keyword>
<keyword id="KW-0963">Cytoplasm</keyword>
<keyword id="KW-0418">Kinase</keyword>
<keyword id="KW-0547">Nucleotide-binding</keyword>
<keyword id="KW-1185">Reference proteome</keyword>
<keyword id="KW-0808">Transferase</keyword>
<reference key="1">
    <citation type="journal article" date="2003" name="J. Bacteriol.">
        <title>Complete genome sequence of the ammonia-oxidizing bacterium and obligate chemolithoautotroph Nitrosomonas europaea.</title>
        <authorList>
            <person name="Chain P."/>
            <person name="Lamerdin J.E."/>
            <person name="Larimer F.W."/>
            <person name="Regala W."/>
            <person name="Lao V."/>
            <person name="Land M.L."/>
            <person name="Hauser L."/>
            <person name="Hooper A.B."/>
            <person name="Klotz M.G."/>
            <person name="Norton J."/>
            <person name="Sayavedra-Soto L.A."/>
            <person name="Arciero D.M."/>
            <person name="Hommes N.G."/>
            <person name="Whittaker M.M."/>
            <person name="Arp D.J."/>
        </authorList>
    </citation>
    <scope>NUCLEOTIDE SEQUENCE [LARGE SCALE GENOMIC DNA]</scope>
    <source>
        <strain>ATCC 19718 / CIP 103999 / KCTC 2705 / NBRC 14298</strain>
    </source>
</reference>
<dbReference type="EC" id="2.7.1.24" evidence="1"/>
<dbReference type="EMBL" id="AL954747">
    <property type="protein sequence ID" value="CAD84509.1"/>
    <property type="molecule type" value="Genomic_DNA"/>
</dbReference>
<dbReference type="RefSeq" id="WP_011111224.1">
    <property type="nucleotide sequence ID" value="NC_004757.1"/>
</dbReference>
<dbReference type="SMR" id="Q82WR4"/>
<dbReference type="STRING" id="228410.NE0598"/>
<dbReference type="GeneID" id="87103798"/>
<dbReference type="KEGG" id="neu:NE0598"/>
<dbReference type="eggNOG" id="COG0237">
    <property type="taxonomic scope" value="Bacteria"/>
</dbReference>
<dbReference type="HOGENOM" id="CLU_057180_1_2_4"/>
<dbReference type="OrthoDB" id="9812943at2"/>
<dbReference type="PhylomeDB" id="Q82WR4"/>
<dbReference type="UniPathway" id="UPA00241">
    <property type="reaction ID" value="UER00356"/>
</dbReference>
<dbReference type="Proteomes" id="UP000001416">
    <property type="component" value="Chromosome"/>
</dbReference>
<dbReference type="GO" id="GO:0005737">
    <property type="term" value="C:cytoplasm"/>
    <property type="evidence" value="ECO:0007669"/>
    <property type="project" value="UniProtKB-SubCell"/>
</dbReference>
<dbReference type="GO" id="GO:0005524">
    <property type="term" value="F:ATP binding"/>
    <property type="evidence" value="ECO:0007669"/>
    <property type="project" value="UniProtKB-UniRule"/>
</dbReference>
<dbReference type="GO" id="GO:0004140">
    <property type="term" value="F:dephospho-CoA kinase activity"/>
    <property type="evidence" value="ECO:0007669"/>
    <property type="project" value="UniProtKB-UniRule"/>
</dbReference>
<dbReference type="GO" id="GO:0015937">
    <property type="term" value="P:coenzyme A biosynthetic process"/>
    <property type="evidence" value="ECO:0007669"/>
    <property type="project" value="UniProtKB-UniRule"/>
</dbReference>
<dbReference type="CDD" id="cd02022">
    <property type="entry name" value="DPCK"/>
    <property type="match status" value="1"/>
</dbReference>
<dbReference type="Gene3D" id="3.40.50.300">
    <property type="entry name" value="P-loop containing nucleotide triphosphate hydrolases"/>
    <property type="match status" value="1"/>
</dbReference>
<dbReference type="HAMAP" id="MF_00376">
    <property type="entry name" value="Dephospho_CoA_kinase"/>
    <property type="match status" value="1"/>
</dbReference>
<dbReference type="InterPro" id="IPR001977">
    <property type="entry name" value="Depp_CoAkinase"/>
</dbReference>
<dbReference type="InterPro" id="IPR027417">
    <property type="entry name" value="P-loop_NTPase"/>
</dbReference>
<dbReference type="NCBIfam" id="TIGR00152">
    <property type="entry name" value="dephospho-CoA kinase"/>
    <property type="match status" value="1"/>
</dbReference>
<dbReference type="PANTHER" id="PTHR10695:SF46">
    <property type="entry name" value="BIFUNCTIONAL COENZYME A SYNTHASE-RELATED"/>
    <property type="match status" value="1"/>
</dbReference>
<dbReference type="PANTHER" id="PTHR10695">
    <property type="entry name" value="DEPHOSPHO-COA KINASE-RELATED"/>
    <property type="match status" value="1"/>
</dbReference>
<dbReference type="Pfam" id="PF01121">
    <property type="entry name" value="CoaE"/>
    <property type="match status" value="1"/>
</dbReference>
<dbReference type="SUPFAM" id="SSF52540">
    <property type="entry name" value="P-loop containing nucleoside triphosphate hydrolases"/>
    <property type="match status" value="1"/>
</dbReference>
<dbReference type="PROSITE" id="PS51219">
    <property type="entry name" value="DPCK"/>
    <property type="match status" value="1"/>
</dbReference>
<gene>
    <name evidence="1" type="primary">coaE</name>
    <name type="ordered locus">NE0598</name>
</gene>
<organism>
    <name type="scientific">Nitrosomonas europaea (strain ATCC 19718 / CIP 103999 / KCTC 2705 / NBRC 14298)</name>
    <dbReference type="NCBI Taxonomy" id="228410"/>
    <lineage>
        <taxon>Bacteria</taxon>
        <taxon>Pseudomonadati</taxon>
        <taxon>Pseudomonadota</taxon>
        <taxon>Betaproteobacteria</taxon>
        <taxon>Nitrosomonadales</taxon>
        <taxon>Nitrosomonadaceae</taxon>
        <taxon>Nitrosomonas</taxon>
    </lineage>
</organism>
<feature type="chain" id="PRO_0000172969" description="Dephospho-CoA kinase">
    <location>
        <begin position="1"/>
        <end position="203"/>
    </location>
</feature>
<feature type="domain" description="DPCK" evidence="1">
    <location>
        <begin position="4"/>
        <end position="201"/>
    </location>
</feature>
<feature type="binding site" evidence="1">
    <location>
        <begin position="12"/>
        <end position="17"/>
    </location>
    <ligand>
        <name>ATP</name>
        <dbReference type="ChEBI" id="CHEBI:30616"/>
    </ligand>
</feature>
<accession>Q82WR4</accession>
<proteinExistence type="inferred from homology"/>
<evidence type="ECO:0000255" key="1">
    <source>
        <dbReference type="HAMAP-Rule" id="MF_00376"/>
    </source>
</evidence>
<comment type="function">
    <text evidence="1">Catalyzes the phosphorylation of the 3'-hydroxyl group of dephosphocoenzyme A to form coenzyme A.</text>
</comment>
<comment type="catalytic activity">
    <reaction evidence="1">
        <text>3'-dephospho-CoA + ATP = ADP + CoA + H(+)</text>
        <dbReference type="Rhea" id="RHEA:18245"/>
        <dbReference type="ChEBI" id="CHEBI:15378"/>
        <dbReference type="ChEBI" id="CHEBI:30616"/>
        <dbReference type="ChEBI" id="CHEBI:57287"/>
        <dbReference type="ChEBI" id="CHEBI:57328"/>
        <dbReference type="ChEBI" id="CHEBI:456216"/>
        <dbReference type="EC" id="2.7.1.24"/>
    </reaction>
</comment>
<comment type="pathway">
    <text evidence="1">Cofactor biosynthesis; coenzyme A biosynthesis; CoA from (R)-pantothenate: step 5/5.</text>
</comment>
<comment type="subcellular location">
    <subcellularLocation>
        <location evidence="1">Cytoplasm</location>
    </subcellularLocation>
</comment>
<comment type="similarity">
    <text evidence="1">Belongs to the CoaE family.</text>
</comment>
<name>COAE_NITEU</name>
<sequence length="203" mass="22867">MALIIGLTGGIGSGKTRAADSFRELGIEIIDTDQIAHELTRSAGKAISPIRIAFGDCFILDDGSLDRSAMRRLVFSDETARHRLESILHPLIYQETLQRLPLIQSEYGIVVVPLLLEIDGYLKLVDRVLVIDCPEPLQISRTMLRSKLSEQEVRDVMAVQCSRDKRLAQADDVIVNDSGEQHLQRQVEELHRKYLMLARKHGL</sequence>
<protein>
    <recommendedName>
        <fullName evidence="1">Dephospho-CoA kinase</fullName>
        <ecNumber evidence="1">2.7.1.24</ecNumber>
    </recommendedName>
    <alternativeName>
        <fullName evidence="1">Dephosphocoenzyme A kinase</fullName>
    </alternativeName>
</protein>